<proteinExistence type="inferred from homology"/>
<gene>
    <name evidence="1" type="primary">pstB</name>
    <name type="ordered locus">SA1218</name>
</gene>
<accession>P69879</accession>
<accession>Q9EX64</accession>
<feature type="chain" id="PRO_0000092879" description="Phosphate import ATP-binding protein PstB">
    <location>
        <begin position="1"/>
        <end position="283"/>
    </location>
</feature>
<feature type="domain" description="ABC transporter" evidence="1">
    <location>
        <begin position="37"/>
        <end position="278"/>
    </location>
</feature>
<feature type="region of interest" description="Disordered" evidence="2">
    <location>
        <begin position="1"/>
        <end position="32"/>
    </location>
</feature>
<feature type="compositionally biased region" description="Polar residues" evidence="2">
    <location>
        <begin position="1"/>
        <end position="20"/>
    </location>
</feature>
<feature type="binding site" evidence="1">
    <location>
        <begin position="69"/>
        <end position="76"/>
    </location>
    <ligand>
        <name>ATP</name>
        <dbReference type="ChEBI" id="CHEBI:30616"/>
    </ligand>
</feature>
<evidence type="ECO:0000255" key="1">
    <source>
        <dbReference type="HAMAP-Rule" id="MF_01702"/>
    </source>
</evidence>
<evidence type="ECO:0000256" key="2">
    <source>
        <dbReference type="SAM" id="MobiDB-lite"/>
    </source>
</evidence>
<reference key="1">
    <citation type="journal article" date="2001" name="Lancet">
        <title>Whole genome sequencing of meticillin-resistant Staphylococcus aureus.</title>
        <authorList>
            <person name="Kuroda M."/>
            <person name="Ohta T."/>
            <person name="Uchiyama I."/>
            <person name="Baba T."/>
            <person name="Yuzawa H."/>
            <person name="Kobayashi I."/>
            <person name="Cui L."/>
            <person name="Oguchi A."/>
            <person name="Aoki K."/>
            <person name="Nagai Y."/>
            <person name="Lian J.-Q."/>
            <person name="Ito T."/>
            <person name="Kanamori M."/>
            <person name="Matsumaru H."/>
            <person name="Maruyama A."/>
            <person name="Murakami H."/>
            <person name="Hosoyama A."/>
            <person name="Mizutani-Ui Y."/>
            <person name="Takahashi N.K."/>
            <person name="Sawano T."/>
            <person name="Inoue R."/>
            <person name="Kaito C."/>
            <person name="Sekimizu K."/>
            <person name="Hirakawa H."/>
            <person name="Kuhara S."/>
            <person name="Goto S."/>
            <person name="Yabuzaki J."/>
            <person name="Kanehisa M."/>
            <person name="Yamashita A."/>
            <person name="Oshima K."/>
            <person name="Furuya K."/>
            <person name="Yoshino C."/>
            <person name="Shiba T."/>
            <person name="Hattori M."/>
            <person name="Ogasawara N."/>
            <person name="Hayashi H."/>
            <person name="Hiramatsu K."/>
        </authorList>
    </citation>
    <scope>NUCLEOTIDE SEQUENCE [LARGE SCALE GENOMIC DNA]</scope>
    <source>
        <strain>N315</strain>
    </source>
</reference>
<protein>
    <recommendedName>
        <fullName evidence="1">Phosphate import ATP-binding protein PstB</fullName>
        <ecNumber evidence="1">7.3.2.1</ecNumber>
    </recommendedName>
    <alternativeName>
        <fullName evidence="1">ABC phosphate transporter</fullName>
    </alternativeName>
    <alternativeName>
        <fullName evidence="1">Phosphate-transporting ATPase</fullName>
    </alternativeName>
</protein>
<dbReference type="EC" id="7.3.2.1" evidence="1"/>
<dbReference type="EMBL" id="BA000018">
    <property type="protein sequence ID" value="BAB42478.1"/>
    <property type="molecule type" value="Genomic_DNA"/>
</dbReference>
<dbReference type="PIR" id="B89915">
    <property type="entry name" value="B89915"/>
</dbReference>
<dbReference type="RefSeq" id="WP_000079447.1">
    <property type="nucleotide sequence ID" value="NC_002745.2"/>
</dbReference>
<dbReference type="SMR" id="P69879"/>
<dbReference type="EnsemblBacteria" id="BAB42478">
    <property type="protein sequence ID" value="BAB42478"/>
    <property type="gene ID" value="BAB42478"/>
</dbReference>
<dbReference type="KEGG" id="sau:SA1218"/>
<dbReference type="HOGENOM" id="CLU_000604_1_22_9"/>
<dbReference type="GO" id="GO:0005886">
    <property type="term" value="C:plasma membrane"/>
    <property type="evidence" value="ECO:0007669"/>
    <property type="project" value="UniProtKB-SubCell"/>
</dbReference>
<dbReference type="GO" id="GO:0005524">
    <property type="term" value="F:ATP binding"/>
    <property type="evidence" value="ECO:0007669"/>
    <property type="project" value="UniProtKB-KW"/>
</dbReference>
<dbReference type="GO" id="GO:0016887">
    <property type="term" value="F:ATP hydrolysis activity"/>
    <property type="evidence" value="ECO:0007669"/>
    <property type="project" value="InterPro"/>
</dbReference>
<dbReference type="GO" id="GO:0015415">
    <property type="term" value="F:ATPase-coupled phosphate ion transmembrane transporter activity"/>
    <property type="evidence" value="ECO:0007669"/>
    <property type="project" value="UniProtKB-EC"/>
</dbReference>
<dbReference type="GO" id="GO:0035435">
    <property type="term" value="P:phosphate ion transmembrane transport"/>
    <property type="evidence" value="ECO:0007669"/>
    <property type="project" value="InterPro"/>
</dbReference>
<dbReference type="CDD" id="cd03260">
    <property type="entry name" value="ABC_PstB_phosphate_transporter"/>
    <property type="match status" value="1"/>
</dbReference>
<dbReference type="Gene3D" id="3.40.50.300">
    <property type="entry name" value="P-loop containing nucleotide triphosphate hydrolases"/>
    <property type="match status" value="1"/>
</dbReference>
<dbReference type="InterPro" id="IPR003593">
    <property type="entry name" value="AAA+_ATPase"/>
</dbReference>
<dbReference type="InterPro" id="IPR003439">
    <property type="entry name" value="ABC_transporter-like_ATP-bd"/>
</dbReference>
<dbReference type="InterPro" id="IPR017871">
    <property type="entry name" value="ABC_transporter-like_CS"/>
</dbReference>
<dbReference type="InterPro" id="IPR027417">
    <property type="entry name" value="P-loop_NTPase"/>
</dbReference>
<dbReference type="InterPro" id="IPR005670">
    <property type="entry name" value="PstB-like"/>
</dbReference>
<dbReference type="NCBIfam" id="TIGR00972">
    <property type="entry name" value="3a0107s01c2"/>
    <property type="match status" value="1"/>
</dbReference>
<dbReference type="PANTHER" id="PTHR43423">
    <property type="entry name" value="ABC TRANSPORTER I FAMILY MEMBER 17"/>
    <property type="match status" value="1"/>
</dbReference>
<dbReference type="PANTHER" id="PTHR43423:SF1">
    <property type="entry name" value="ABC TRANSPORTER I FAMILY MEMBER 17"/>
    <property type="match status" value="1"/>
</dbReference>
<dbReference type="Pfam" id="PF00005">
    <property type="entry name" value="ABC_tran"/>
    <property type="match status" value="1"/>
</dbReference>
<dbReference type="SMART" id="SM00382">
    <property type="entry name" value="AAA"/>
    <property type="match status" value="1"/>
</dbReference>
<dbReference type="SUPFAM" id="SSF52540">
    <property type="entry name" value="P-loop containing nucleoside triphosphate hydrolases"/>
    <property type="match status" value="1"/>
</dbReference>
<dbReference type="PROSITE" id="PS00211">
    <property type="entry name" value="ABC_TRANSPORTER_1"/>
    <property type="match status" value="1"/>
</dbReference>
<dbReference type="PROSITE" id="PS50893">
    <property type="entry name" value="ABC_TRANSPORTER_2"/>
    <property type="match status" value="1"/>
</dbReference>
<dbReference type="PROSITE" id="PS51238">
    <property type="entry name" value="PSTB"/>
    <property type="match status" value="1"/>
</dbReference>
<name>PSTB_STAAN</name>
<organism>
    <name type="scientific">Staphylococcus aureus (strain N315)</name>
    <dbReference type="NCBI Taxonomy" id="158879"/>
    <lineage>
        <taxon>Bacteria</taxon>
        <taxon>Bacillati</taxon>
        <taxon>Bacillota</taxon>
        <taxon>Bacilli</taxon>
        <taxon>Bacillales</taxon>
        <taxon>Staphylococcaceae</taxon>
        <taxon>Staphylococcus</taxon>
    </lineage>
</organism>
<sequence length="283" mass="32154">MAQTLAQTKQISQSHTFDVSQSHHKTPDDTNSHSVIYSTQNLDLWYGENHALQNINLDIYENQITAIIGPSGCGKSTYIKTLNRMVELVPSVKTAGKILYRDQDIFDQKYSKEQLRTNVGMVFQQPNPFPKSIYDNITYGPKIHGIKNKKVLDEIVEKSLRGAAIWDELKDRLHTNAYSLSGGQQQRVCIARCLAIEPEVILMDEPTSALDPISTLRVEELVQELKEKYTIIMVTHNMQQAARVSDKTAFFLNGYVNEYDDTDKIFSNPSNKKTEDYISGRFG</sequence>
<comment type="function">
    <text evidence="1">Part of the ABC transporter complex PstSACB involved in phosphate import. Responsible for energy coupling to the transport system.</text>
</comment>
<comment type="catalytic activity">
    <reaction evidence="1">
        <text>phosphate(out) + ATP + H2O = ADP + 2 phosphate(in) + H(+)</text>
        <dbReference type="Rhea" id="RHEA:24440"/>
        <dbReference type="ChEBI" id="CHEBI:15377"/>
        <dbReference type="ChEBI" id="CHEBI:15378"/>
        <dbReference type="ChEBI" id="CHEBI:30616"/>
        <dbReference type="ChEBI" id="CHEBI:43474"/>
        <dbReference type="ChEBI" id="CHEBI:456216"/>
        <dbReference type="EC" id="7.3.2.1"/>
    </reaction>
</comment>
<comment type="subunit">
    <text evidence="1">The complex is composed of two ATP-binding proteins (PstB), two transmembrane proteins (PstC and PstA) and a solute-binding protein (PstS).</text>
</comment>
<comment type="subcellular location">
    <subcellularLocation>
        <location evidence="1">Cell membrane</location>
        <topology evidence="1">Peripheral membrane protein</topology>
    </subcellularLocation>
</comment>
<comment type="similarity">
    <text evidence="1">Belongs to the ABC transporter superfamily. Phosphate importer (TC 3.A.1.7) family.</text>
</comment>
<keyword id="KW-0067">ATP-binding</keyword>
<keyword id="KW-1003">Cell membrane</keyword>
<keyword id="KW-0472">Membrane</keyword>
<keyword id="KW-0547">Nucleotide-binding</keyword>
<keyword id="KW-0592">Phosphate transport</keyword>
<keyword id="KW-1278">Translocase</keyword>
<keyword id="KW-0813">Transport</keyword>